<name>IF2_GEOSL</name>
<proteinExistence type="inferred from homology"/>
<reference key="1">
    <citation type="journal article" date="2003" name="Science">
        <title>Genome of Geobacter sulfurreducens: metal reduction in subsurface environments.</title>
        <authorList>
            <person name="Methe B.A."/>
            <person name="Nelson K.E."/>
            <person name="Eisen J.A."/>
            <person name="Paulsen I.T."/>
            <person name="Nelson W.C."/>
            <person name="Heidelberg J.F."/>
            <person name="Wu D."/>
            <person name="Wu M."/>
            <person name="Ward N.L."/>
            <person name="Beanan M.J."/>
            <person name="Dodson R.J."/>
            <person name="Madupu R."/>
            <person name="Brinkac L.M."/>
            <person name="Daugherty S.C."/>
            <person name="DeBoy R.T."/>
            <person name="Durkin A.S."/>
            <person name="Gwinn M.L."/>
            <person name="Kolonay J.F."/>
            <person name="Sullivan S.A."/>
            <person name="Haft D.H."/>
            <person name="Selengut J."/>
            <person name="Davidsen T.M."/>
            <person name="Zafar N."/>
            <person name="White O."/>
            <person name="Tran B."/>
            <person name="Romero C."/>
            <person name="Forberger H.A."/>
            <person name="Weidman J.F."/>
            <person name="Khouri H.M."/>
            <person name="Feldblyum T.V."/>
            <person name="Utterback T.R."/>
            <person name="Van Aken S.E."/>
            <person name="Lovley D.R."/>
            <person name="Fraser C.M."/>
        </authorList>
    </citation>
    <scope>NUCLEOTIDE SEQUENCE [LARGE SCALE GENOMIC DNA]</scope>
    <source>
        <strain>ATCC 51573 / DSM 12127 / PCA</strain>
    </source>
</reference>
<keyword id="KW-0963">Cytoplasm</keyword>
<keyword id="KW-0342">GTP-binding</keyword>
<keyword id="KW-0396">Initiation factor</keyword>
<keyword id="KW-0547">Nucleotide-binding</keyword>
<keyword id="KW-0648">Protein biosynthesis</keyword>
<keyword id="KW-1185">Reference proteome</keyword>
<feature type="chain" id="PRO_0000228201" description="Translation initiation factor IF-2">
    <location>
        <begin position="1"/>
        <end position="883"/>
    </location>
</feature>
<feature type="domain" description="tr-type G">
    <location>
        <begin position="383"/>
        <end position="552"/>
    </location>
</feature>
<feature type="region of interest" description="Disordered" evidence="3">
    <location>
        <begin position="118"/>
        <end position="261"/>
    </location>
</feature>
<feature type="region of interest" description="G1" evidence="1">
    <location>
        <begin position="392"/>
        <end position="399"/>
    </location>
</feature>
<feature type="region of interest" description="G2" evidence="1">
    <location>
        <begin position="417"/>
        <end position="421"/>
    </location>
</feature>
<feature type="region of interest" description="G3" evidence="1">
    <location>
        <begin position="438"/>
        <end position="441"/>
    </location>
</feature>
<feature type="region of interest" description="G4" evidence="1">
    <location>
        <begin position="492"/>
        <end position="495"/>
    </location>
</feature>
<feature type="region of interest" description="G5" evidence="1">
    <location>
        <begin position="528"/>
        <end position="530"/>
    </location>
</feature>
<feature type="compositionally biased region" description="Low complexity" evidence="3">
    <location>
        <begin position="124"/>
        <end position="150"/>
    </location>
</feature>
<feature type="compositionally biased region" description="Basic and acidic residues" evidence="3">
    <location>
        <begin position="183"/>
        <end position="200"/>
    </location>
</feature>
<feature type="compositionally biased region" description="Basic and acidic residues" evidence="3">
    <location>
        <begin position="252"/>
        <end position="261"/>
    </location>
</feature>
<feature type="binding site" evidence="2">
    <location>
        <begin position="392"/>
        <end position="399"/>
    </location>
    <ligand>
        <name>GTP</name>
        <dbReference type="ChEBI" id="CHEBI:37565"/>
    </ligand>
</feature>
<feature type="binding site" evidence="2">
    <location>
        <begin position="438"/>
        <end position="442"/>
    </location>
    <ligand>
        <name>GTP</name>
        <dbReference type="ChEBI" id="CHEBI:37565"/>
    </ligand>
</feature>
<feature type="binding site" evidence="2">
    <location>
        <begin position="492"/>
        <end position="495"/>
    </location>
    <ligand>
        <name>GTP</name>
        <dbReference type="ChEBI" id="CHEBI:37565"/>
    </ligand>
</feature>
<sequence length="883" mass="95693">MSKTHVYELAKKMGIENKELLTRLKSLGIEVKNHLSVLEEDEILKVTAPPAAPPKSGPQEEVRVTTTVIRRRRVAEAAPAETPVEAVAPPVESAPAPLEVEAVEEAVVQAPPVVEPPVARESEAAPAEEPVAAAVKPASEPPVVQKAPVAPAAPPVDDKPTANKARILGRVELPGITTPAPKPADRREATAPKKRIEERIMTPSPTDRPAPAGDDRRKAGTPPPPPRKGKEFVAPAEPERGAKKPGGGGAGKKKEAFKKTELLEKRERIFEPGPKTGKGKKRERDMVSLGRKTEITVPKAIKRIIKISESITVGELAKRMGVKATDLIRVLMKMGMMVTINHPLDVDTATLVASEFGYEIENVAIDVDEMLESVPDAPESLTKRPPVVTIMGHVDHGKTSLLDAIREANVIAGEAGGITQHIGAYDVELNGRKITFLDTPGHEAFTAMRARGAKVTDIVILVVAADDGVMPQTREAVNHSKAAGVPIIVAINKIDKPEAKPERVKQELMEFGLVSEEWGGETIFVEVSAKKRINLPELLEMVLLQADVMDLKANPDKDARGTIVEAKLDRGRGPVATVLVQEGTLKIGDYFVAGVNSGRVRAMQNDRGDKVNEAGPSMPVEVIGFTGVPDAGDVFISLVDEKRAKEIASHRQQKLRETELAKHSKMSLEQLYDKIQKGEVKDLNAIVKADVQGSVEAVSESLRKLSTDAVRLNVIHSSVGAITETDVNLASASNAIILGFNVRPEPKASAHAEKEGVDIRLYNIIYDAVEDIKKAMEGLLEPTLREKYLGRAEVREVFSVPKVGNVAGCYIQDGKMIRNAQVRLLRDNVVIYEGKMSSLRRFKDDVKEVATGYECGIGLENYNDIKVGDVIEDFEIEKIATTL</sequence>
<evidence type="ECO:0000250" key="1"/>
<evidence type="ECO:0000255" key="2">
    <source>
        <dbReference type="HAMAP-Rule" id="MF_00100"/>
    </source>
</evidence>
<evidence type="ECO:0000256" key="3">
    <source>
        <dbReference type="SAM" id="MobiDB-lite"/>
    </source>
</evidence>
<organism>
    <name type="scientific">Geobacter sulfurreducens (strain ATCC 51573 / DSM 12127 / PCA)</name>
    <dbReference type="NCBI Taxonomy" id="243231"/>
    <lineage>
        <taxon>Bacteria</taxon>
        <taxon>Pseudomonadati</taxon>
        <taxon>Thermodesulfobacteriota</taxon>
        <taxon>Desulfuromonadia</taxon>
        <taxon>Geobacterales</taxon>
        <taxon>Geobacteraceae</taxon>
        <taxon>Geobacter</taxon>
    </lineage>
</organism>
<gene>
    <name evidence="2" type="primary">infB</name>
    <name type="ordered locus">GSU1588</name>
</gene>
<protein>
    <recommendedName>
        <fullName evidence="2">Translation initiation factor IF-2</fullName>
    </recommendedName>
</protein>
<dbReference type="EMBL" id="AE017180">
    <property type="protein sequence ID" value="AAR34962.1"/>
    <property type="molecule type" value="Genomic_DNA"/>
</dbReference>
<dbReference type="RefSeq" id="NP_952639.1">
    <property type="nucleotide sequence ID" value="NC_002939.5"/>
</dbReference>
<dbReference type="RefSeq" id="WP_010942233.1">
    <property type="nucleotide sequence ID" value="NC_002939.5"/>
</dbReference>
<dbReference type="SMR" id="Q74CT3"/>
<dbReference type="FunCoup" id="Q74CT3">
    <property type="interactions" value="614"/>
</dbReference>
<dbReference type="STRING" id="243231.GSU1588"/>
<dbReference type="EnsemblBacteria" id="AAR34962">
    <property type="protein sequence ID" value="AAR34962"/>
    <property type="gene ID" value="GSU1588"/>
</dbReference>
<dbReference type="KEGG" id="gsu:GSU1588"/>
<dbReference type="PATRIC" id="fig|243231.5.peg.1629"/>
<dbReference type="eggNOG" id="COG0532">
    <property type="taxonomic scope" value="Bacteria"/>
</dbReference>
<dbReference type="HOGENOM" id="CLU_006301_5_1_7"/>
<dbReference type="InParanoid" id="Q74CT3"/>
<dbReference type="OrthoDB" id="9811804at2"/>
<dbReference type="Proteomes" id="UP000000577">
    <property type="component" value="Chromosome"/>
</dbReference>
<dbReference type="GO" id="GO:0005737">
    <property type="term" value="C:cytoplasm"/>
    <property type="evidence" value="ECO:0000318"/>
    <property type="project" value="GO_Central"/>
</dbReference>
<dbReference type="GO" id="GO:0005829">
    <property type="term" value="C:cytosol"/>
    <property type="evidence" value="ECO:0000318"/>
    <property type="project" value="GO_Central"/>
</dbReference>
<dbReference type="GO" id="GO:0005525">
    <property type="term" value="F:GTP binding"/>
    <property type="evidence" value="ECO:0007669"/>
    <property type="project" value="UniProtKB-KW"/>
</dbReference>
<dbReference type="GO" id="GO:0003924">
    <property type="term" value="F:GTPase activity"/>
    <property type="evidence" value="ECO:0007669"/>
    <property type="project" value="UniProtKB-UniRule"/>
</dbReference>
<dbReference type="GO" id="GO:0003743">
    <property type="term" value="F:translation initiation factor activity"/>
    <property type="evidence" value="ECO:0000318"/>
    <property type="project" value="GO_Central"/>
</dbReference>
<dbReference type="GO" id="GO:0006413">
    <property type="term" value="P:translational initiation"/>
    <property type="evidence" value="ECO:0000318"/>
    <property type="project" value="GO_Central"/>
</dbReference>
<dbReference type="CDD" id="cd01887">
    <property type="entry name" value="IF2_eIF5B"/>
    <property type="match status" value="1"/>
</dbReference>
<dbReference type="CDD" id="cd03702">
    <property type="entry name" value="IF2_mtIF2_II"/>
    <property type="match status" value="1"/>
</dbReference>
<dbReference type="CDD" id="cd03692">
    <property type="entry name" value="mtIF2_IVc"/>
    <property type="match status" value="1"/>
</dbReference>
<dbReference type="FunFam" id="2.40.30.10:FF:000007">
    <property type="entry name" value="Translation initiation factor IF-2"/>
    <property type="match status" value="1"/>
</dbReference>
<dbReference type="FunFam" id="2.40.30.10:FF:000008">
    <property type="entry name" value="Translation initiation factor IF-2"/>
    <property type="match status" value="1"/>
</dbReference>
<dbReference type="FunFam" id="3.40.50.10050:FF:000001">
    <property type="entry name" value="Translation initiation factor IF-2"/>
    <property type="match status" value="1"/>
</dbReference>
<dbReference type="FunFam" id="3.40.50.300:FF:000019">
    <property type="entry name" value="Translation initiation factor IF-2"/>
    <property type="match status" value="1"/>
</dbReference>
<dbReference type="Gene3D" id="1.10.10.2480">
    <property type="match status" value="1"/>
</dbReference>
<dbReference type="Gene3D" id="3.40.50.300">
    <property type="entry name" value="P-loop containing nucleotide triphosphate hydrolases"/>
    <property type="match status" value="1"/>
</dbReference>
<dbReference type="Gene3D" id="2.40.30.10">
    <property type="entry name" value="Translation factors"/>
    <property type="match status" value="2"/>
</dbReference>
<dbReference type="Gene3D" id="3.40.50.10050">
    <property type="entry name" value="Translation initiation factor IF- 2, domain 3"/>
    <property type="match status" value="1"/>
</dbReference>
<dbReference type="HAMAP" id="MF_00100_B">
    <property type="entry name" value="IF_2_B"/>
    <property type="match status" value="1"/>
</dbReference>
<dbReference type="InterPro" id="IPR053905">
    <property type="entry name" value="EF-G-like_DII"/>
</dbReference>
<dbReference type="InterPro" id="IPR004161">
    <property type="entry name" value="EFTu-like_2"/>
</dbReference>
<dbReference type="InterPro" id="IPR044145">
    <property type="entry name" value="IF2_II"/>
</dbReference>
<dbReference type="InterPro" id="IPR006847">
    <property type="entry name" value="IF2_N"/>
</dbReference>
<dbReference type="InterPro" id="IPR027417">
    <property type="entry name" value="P-loop_NTPase"/>
</dbReference>
<dbReference type="InterPro" id="IPR005225">
    <property type="entry name" value="Small_GTP-bd"/>
</dbReference>
<dbReference type="InterPro" id="IPR000795">
    <property type="entry name" value="T_Tr_GTP-bd_dom"/>
</dbReference>
<dbReference type="InterPro" id="IPR000178">
    <property type="entry name" value="TF_IF2_bacterial-like"/>
</dbReference>
<dbReference type="InterPro" id="IPR015760">
    <property type="entry name" value="TIF_IF2"/>
</dbReference>
<dbReference type="InterPro" id="IPR023115">
    <property type="entry name" value="TIF_IF2_dom3"/>
</dbReference>
<dbReference type="InterPro" id="IPR036925">
    <property type="entry name" value="TIF_IF2_dom3_sf"/>
</dbReference>
<dbReference type="InterPro" id="IPR009000">
    <property type="entry name" value="Transl_B-barrel_sf"/>
</dbReference>
<dbReference type="NCBIfam" id="TIGR00487">
    <property type="entry name" value="IF-2"/>
    <property type="match status" value="1"/>
</dbReference>
<dbReference type="NCBIfam" id="TIGR00231">
    <property type="entry name" value="small_GTP"/>
    <property type="match status" value="1"/>
</dbReference>
<dbReference type="PANTHER" id="PTHR43381:SF5">
    <property type="entry name" value="TR-TYPE G DOMAIN-CONTAINING PROTEIN"/>
    <property type="match status" value="1"/>
</dbReference>
<dbReference type="PANTHER" id="PTHR43381">
    <property type="entry name" value="TRANSLATION INITIATION FACTOR IF-2-RELATED"/>
    <property type="match status" value="1"/>
</dbReference>
<dbReference type="Pfam" id="PF22042">
    <property type="entry name" value="EF-G_D2"/>
    <property type="match status" value="1"/>
</dbReference>
<dbReference type="Pfam" id="PF00009">
    <property type="entry name" value="GTP_EFTU"/>
    <property type="match status" value="1"/>
</dbReference>
<dbReference type="Pfam" id="PF03144">
    <property type="entry name" value="GTP_EFTU_D2"/>
    <property type="match status" value="1"/>
</dbReference>
<dbReference type="Pfam" id="PF11987">
    <property type="entry name" value="IF-2"/>
    <property type="match status" value="1"/>
</dbReference>
<dbReference type="Pfam" id="PF04760">
    <property type="entry name" value="IF2_N"/>
    <property type="match status" value="2"/>
</dbReference>
<dbReference type="PRINTS" id="PR00449">
    <property type="entry name" value="RASTRNSFRMNG"/>
</dbReference>
<dbReference type="SUPFAM" id="SSF52156">
    <property type="entry name" value="Initiation factor IF2/eIF5b, domain 3"/>
    <property type="match status" value="1"/>
</dbReference>
<dbReference type="SUPFAM" id="SSF52540">
    <property type="entry name" value="P-loop containing nucleoside triphosphate hydrolases"/>
    <property type="match status" value="1"/>
</dbReference>
<dbReference type="SUPFAM" id="SSF50447">
    <property type="entry name" value="Translation proteins"/>
    <property type="match status" value="2"/>
</dbReference>
<dbReference type="PROSITE" id="PS51722">
    <property type="entry name" value="G_TR_2"/>
    <property type="match status" value="1"/>
</dbReference>
<dbReference type="PROSITE" id="PS01176">
    <property type="entry name" value="IF2"/>
    <property type="match status" value="1"/>
</dbReference>
<accession>Q74CT3</accession>
<comment type="function">
    <text evidence="2">One of the essential components for the initiation of protein synthesis. Protects formylmethionyl-tRNA from spontaneous hydrolysis and promotes its binding to the 30S ribosomal subunits. Also involved in the hydrolysis of GTP during the formation of the 70S ribosomal complex.</text>
</comment>
<comment type="subcellular location">
    <subcellularLocation>
        <location evidence="2">Cytoplasm</location>
    </subcellularLocation>
</comment>
<comment type="similarity">
    <text evidence="2">Belongs to the TRAFAC class translation factor GTPase superfamily. Classic translation factor GTPase family. IF-2 subfamily.</text>
</comment>